<name>YICL_SALTY</name>
<proteinExistence type="inferred from homology"/>
<reference key="1">
    <citation type="journal article" date="2001" name="Nature">
        <title>Complete genome sequence of Salmonella enterica serovar Typhimurium LT2.</title>
        <authorList>
            <person name="McClelland M."/>
            <person name="Sanderson K.E."/>
            <person name="Spieth J."/>
            <person name="Clifton S.W."/>
            <person name="Latreille P."/>
            <person name="Courtney L."/>
            <person name="Porwollik S."/>
            <person name="Ali J."/>
            <person name="Dante M."/>
            <person name="Du F."/>
            <person name="Hou S."/>
            <person name="Layman D."/>
            <person name="Leonard S."/>
            <person name="Nguyen C."/>
            <person name="Scott K."/>
            <person name="Holmes A."/>
            <person name="Grewal N."/>
            <person name="Mulvaney E."/>
            <person name="Ryan E."/>
            <person name="Sun H."/>
            <person name="Florea L."/>
            <person name="Miller W."/>
            <person name="Stoneking T."/>
            <person name="Nhan M."/>
            <person name="Waterston R."/>
            <person name="Wilson R.K."/>
        </authorList>
    </citation>
    <scope>NUCLEOTIDE SEQUENCE [LARGE SCALE GENOMIC DNA]</scope>
    <source>
        <strain>LT2 / SGSC1412 / ATCC 700720</strain>
    </source>
</reference>
<reference key="2">
    <citation type="journal article" date="1997" name="EMBO J.">
        <title>The Salmonella selC locus contains a pathogenicity island mediating intramacrophage survival.</title>
        <authorList>
            <person name="Blanc-Potard A.-B."/>
            <person name="Groisman E.A."/>
        </authorList>
    </citation>
    <scope>NUCLEOTIDE SEQUENCE [GENOMIC DNA] OF 1-246</scope>
    <source>
        <strain>ATCC 14028s / SGSG 2262</strain>
    </source>
</reference>
<keyword id="KW-0997">Cell inner membrane</keyword>
<keyword id="KW-1003">Cell membrane</keyword>
<keyword id="KW-0472">Membrane</keyword>
<keyword id="KW-1185">Reference proteome</keyword>
<keyword id="KW-0677">Repeat</keyword>
<keyword id="KW-0812">Transmembrane</keyword>
<keyword id="KW-1133">Transmembrane helix</keyword>
<keyword id="KW-0813">Transport</keyword>
<accession>O33787</accession>
<evidence type="ECO:0000250" key="1"/>
<evidence type="ECO:0000255" key="2"/>
<evidence type="ECO:0000305" key="3"/>
<gene>
    <name type="primary">yicL</name>
    <name type="ordered locus">STM3765</name>
</gene>
<comment type="subcellular location">
    <subcellularLocation>
        <location evidence="1">Cell inner membrane</location>
        <topology evidence="1">Multi-pass membrane protein</topology>
    </subcellularLocation>
</comment>
<comment type="similarity">
    <text evidence="3">Belongs to the EamA transporter family.</text>
</comment>
<feature type="chain" id="PRO_0000108174" description="Uncharacterized inner membrane transporter YicL">
    <location>
        <begin position="1"/>
        <end position="300"/>
    </location>
</feature>
<feature type="topological domain" description="Periplasmic" evidence="2">
    <location>
        <begin position="1"/>
        <end position="7"/>
    </location>
</feature>
<feature type="transmembrane region" description="Helical" evidence="2">
    <location>
        <begin position="8"/>
        <end position="28"/>
    </location>
</feature>
<feature type="topological domain" description="Cytoplasmic" evidence="2">
    <location>
        <begin position="29"/>
        <end position="45"/>
    </location>
</feature>
<feature type="transmembrane region" description="Helical" evidence="2">
    <location>
        <begin position="46"/>
        <end position="66"/>
    </location>
</feature>
<feature type="topological domain" description="Periplasmic" evidence="2">
    <location>
        <begin position="67"/>
        <end position="71"/>
    </location>
</feature>
<feature type="transmembrane region" description="Helical" evidence="2">
    <location>
        <begin position="72"/>
        <end position="92"/>
    </location>
</feature>
<feature type="topological domain" description="Cytoplasmic" evidence="2">
    <location>
        <begin position="93"/>
        <end position="99"/>
    </location>
</feature>
<feature type="transmembrane region" description="Helical" evidence="2">
    <location>
        <begin position="100"/>
        <end position="120"/>
    </location>
</feature>
<feature type="topological domain" description="Periplasmic" evidence="2">
    <location>
        <begin position="121"/>
        <end position="124"/>
    </location>
</feature>
<feature type="transmembrane region" description="Helical" evidence="2">
    <location>
        <begin position="125"/>
        <end position="145"/>
    </location>
</feature>
<feature type="topological domain" description="Cytoplasmic" evidence="2">
    <location>
        <begin position="146"/>
        <end position="151"/>
    </location>
</feature>
<feature type="transmembrane region" description="Helical" evidence="2">
    <location>
        <begin position="152"/>
        <end position="172"/>
    </location>
</feature>
<feature type="topological domain" description="Periplasmic" evidence="2">
    <location>
        <begin position="173"/>
        <end position="184"/>
    </location>
</feature>
<feature type="transmembrane region" description="Helical" evidence="2">
    <location>
        <begin position="185"/>
        <end position="205"/>
    </location>
</feature>
<feature type="topological domain" description="Cytoplasmic" evidence="2">
    <location>
        <begin position="206"/>
        <end position="216"/>
    </location>
</feature>
<feature type="transmembrane region" description="Helical" evidence="2">
    <location>
        <begin position="217"/>
        <end position="237"/>
    </location>
</feature>
<feature type="topological domain" description="Periplasmic" evidence="2">
    <location>
        <begin position="238"/>
        <end position="263"/>
    </location>
</feature>
<feature type="transmembrane region" description="Helical" evidence="2">
    <location>
        <begin position="264"/>
        <end position="284"/>
    </location>
</feature>
<feature type="topological domain" description="Cytoplasmic" evidence="2">
    <location>
        <begin position="285"/>
        <end position="300"/>
    </location>
</feature>
<feature type="domain" description="EamA 1">
    <location>
        <begin position="16"/>
        <end position="145"/>
    </location>
</feature>
<feature type="domain" description="EamA 2">
    <location>
        <begin position="167"/>
        <end position="291"/>
    </location>
</feature>
<dbReference type="EMBL" id="AE006468">
    <property type="protein sequence ID" value="AAL22623.1"/>
    <property type="molecule type" value="Genomic_DNA"/>
</dbReference>
<dbReference type="EMBL" id="AJ000509">
    <property type="protein sequence ID" value="CAA04143.1"/>
    <property type="molecule type" value="Genomic_DNA"/>
</dbReference>
<dbReference type="RefSeq" id="NP_462664.1">
    <property type="nucleotide sequence ID" value="NC_003197.2"/>
</dbReference>
<dbReference type="RefSeq" id="WP_001682335.1">
    <property type="nucleotide sequence ID" value="NC_003197.2"/>
</dbReference>
<dbReference type="SMR" id="O33787"/>
<dbReference type="STRING" id="99287.STM3765"/>
<dbReference type="PaxDb" id="99287-STM3765"/>
<dbReference type="GeneID" id="1255289"/>
<dbReference type="KEGG" id="stm:STM3765"/>
<dbReference type="PATRIC" id="fig|99287.12.peg.3984"/>
<dbReference type="HOGENOM" id="CLU_033863_19_0_6"/>
<dbReference type="OMA" id="GVQAFYF"/>
<dbReference type="PhylomeDB" id="O33787"/>
<dbReference type="BioCyc" id="SENT99287:STM3765-MONOMER"/>
<dbReference type="Proteomes" id="UP000001014">
    <property type="component" value="Chromosome"/>
</dbReference>
<dbReference type="GO" id="GO:0005886">
    <property type="term" value="C:plasma membrane"/>
    <property type="evidence" value="ECO:0000318"/>
    <property type="project" value="GO_Central"/>
</dbReference>
<dbReference type="InterPro" id="IPR050638">
    <property type="entry name" value="AA-Vitamin_Transporters"/>
</dbReference>
<dbReference type="InterPro" id="IPR000620">
    <property type="entry name" value="EamA_dom"/>
</dbReference>
<dbReference type="PANTHER" id="PTHR32322:SF2">
    <property type="entry name" value="EAMA DOMAIN-CONTAINING PROTEIN"/>
    <property type="match status" value="1"/>
</dbReference>
<dbReference type="PANTHER" id="PTHR32322">
    <property type="entry name" value="INNER MEMBRANE TRANSPORTER"/>
    <property type="match status" value="1"/>
</dbReference>
<dbReference type="Pfam" id="PF00892">
    <property type="entry name" value="EamA"/>
    <property type="match status" value="2"/>
</dbReference>
<dbReference type="SUPFAM" id="SSF103481">
    <property type="entry name" value="Multidrug resistance efflux transporter EmrE"/>
    <property type="match status" value="2"/>
</dbReference>
<sequence>MGSTRKGMLNVLIAAVLWGSSGVCAQYIMEQSRMSSQFLTMIRLLFAGLILVTFSFMHGDKIFSILKNRKDALSLLIFSVVGALTVQLTFLLTIEKSNAATATVLQFLSPTIIVAWFALARRTRPGILVLTAILTSLIGTFLLVTHGNPTSLSISSAALFWGIASAFAAAFYTTWPSRLIAQYGTLPVVGWSMSFGGLILLPFYAKEGTHFAVSGSLILAFFYLVVIGTSLTFSLYLKGAQLIGGPKASILSCAEPLSSALLSLLLLGISFTLPDWLGTLLILSSVILISLDSRRRARAA</sequence>
<protein>
    <recommendedName>
        <fullName>Uncharacterized inner membrane transporter YicL</fullName>
    </recommendedName>
</protein>
<organism>
    <name type="scientific">Salmonella typhimurium (strain LT2 / SGSC1412 / ATCC 700720)</name>
    <dbReference type="NCBI Taxonomy" id="99287"/>
    <lineage>
        <taxon>Bacteria</taxon>
        <taxon>Pseudomonadati</taxon>
        <taxon>Pseudomonadota</taxon>
        <taxon>Gammaproteobacteria</taxon>
        <taxon>Enterobacterales</taxon>
        <taxon>Enterobacteriaceae</taxon>
        <taxon>Salmonella</taxon>
    </lineage>
</organism>